<reference key="1">
    <citation type="submission" date="2008-05" db="EMBL/GenBank/DDBJ databases">
        <title>Complete sequence of Chlorobium limicola DSM 245.</title>
        <authorList>
            <consortium name="US DOE Joint Genome Institute"/>
            <person name="Lucas S."/>
            <person name="Copeland A."/>
            <person name="Lapidus A."/>
            <person name="Glavina del Rio T."/>
            <person name="Dalin E."/>
            <person name="Tice H."/>
            <person name="Bruce D."/>
            <person name="Goodwin L."/>
            <person name="Pitluck S."/>
            <person name="Schmutz J."/>
            <person name="Larimer F."/>
            <person name="Land M."/>
            <person name="Hauser L."/>
            <person name="Kyrpides N."/>
            <person name="Ovchinnikova G."/>
            <person name="Zhao F."/>
            <person name="Li T."/>
            <person name="Liu Z."/>
            <person name="Overmann J."/>
            <person name="Bryant D.A."/>
            <person name="Richardson P."/>
        </authorList>
    </citation>
    <scope>NUCLEOTIDE SEQUENCE [LARGE SCALE GENOMIC DNA]</scope>
    <source>
        <strain>DSM 245 / NBRC 103803 / 6330</strain>
    </source>
</reference>
<proteinExistence type="inferred from homology"/>
<gene>
    <name evidence="1" type="primary">rplP</name>
    <name type="ordered locus">Clim_2222</name>
</gene>
<comment type="function">
    <text evidence="1">Binds 23S rRNA and is also seen to make contacts with the A and possibly P site tRNAs.</text>
</comment>
<comment type="subunit">
    <text evidence="1">Part of the 50S ribosomal subunit.</text>
</comment>
<comment type="similarity">
    <text evidence="1">Belongs to the universal ribosomal protein uL16 family.</text>
</comment>
<organism>
    <name type="scientific">Chlorobium limicola (strain DSM 245 / NBRC 103803 / 6330)</name>
    <dbReference type="NCBI Taxonomy" id="290315"/>
    <lineage>
        <taxon>Bacteria</taxon>
        <taxon>Pseudomonadati</taxon>
        <taxon>Chlorobiota</taxon>
        <taxon>Chlorobiia</taxon>
        <taxon>Chlorobiales</taxon>
        <taxon>Chlorobiaceae</taxon>
        <taxon>Chlorobium/Pelodictyon group</taxon>
        <taxon>Chlorobium</taxon>
    </lineage>
</organism>
<name>RL16_CHLL2</name>
<dbReference type="EMBL" id="CP001097">
    <property type="protein sequence ID" value="ACD91246.1"/>
    <property type="molecule type" value="Genomic_DNA"/>
</dbReference>
<dbReference type="RefSeq" id="WP_012467113.1">
    <property type="nucleotide sequence ID" value="NC_010803.1"/>
</dbReference>
<dbReference type="SMR" id="B3EGY3"/>
<dbReference type="STRING" id="290315.Clim_2222"/>
<dbReference type="KEGG" id="cli:Clim_2222"/>
<dbReference type="eggNOG" id="COG0197">
    <property type="taxonomic scope" value="Bacteria"/>
</dbReference>
<dbReference type="HOGENOM" id="CLU_078858_2_1_10"/>
<dbReference type="OrthoDB" id="9802589at2"/>
<dbReference type="Proteomes" id="UP000008841">
    <property type="component" value="Chromosome"/>
</dbReference>
<dbReference type="GO" id="GO:0022625">
    <property type="term" value="C:cytosolic large ribosomal subunit"/>
    <property type="evidence" value="ECO:0007669"/>
    <property type="project" value="TreeGrafter"/>
</dbReference>
<dbReference type="GO" id="GO:0019843">
    <property type="term" value="F:rRNA binding"/>
    <property type="evidence" value="ECO:0007669"/>
    <property type="project" value="UniProtKB-UniRule"/>
</dbReference>
<dbReference type="GO" id="GO:0003735">
    <property type="term" value="F:structural constituent of ribosome"/>
    <property type="evidence" value="ECO:0007669"/>
    <property type="project" value="InterPro"/>
</dbReference>
<dbReference type="GO" id="GO:0000049">
    <property type="term" value="F:tRNA binding"/>
    <property type="evidence" value="ECO:0007669"/>
    <property type="project" value="UniProtKB-KW"/>
</dbReference>
<dbReference type="GO" id="GO:0006412">
    <property type="term" value="P:translation"/>
    <property type="evidence" value="ECO:0007669"/>
    <property type="project" value="UniProtKB-UniRule"/>
</dbReference>
<dbReference type="CDD" id="cd01433">
    <property type="entry name" value="Ribosomal_L16_L10e"/>
    <property type="match status" value="1"/>
</dbReference>
<dbReference type="FunFam" id="3.90.1170.10:FF:000001">
    <property type="entry name" value="50S ribosomal protein L16"/>
    <property type="match status" value="1"/>
</dbReference>
<dbReference type="Gene3D" id="3.90.1170.10">
    <property type="entry name" value="Ribosomal protein L10e/L16"/>
    <property type="match status" value="1"/>
</dbReference>
<dbReference type="HAMAP" id="MF_01342">
    <property type="entry name" value="Ribosomal_uL16"/>
    <property type="match status" value="1"/>
</dbReference>
<dbReference type="InterPro" id="IPR047873">
    <property type="entry name" value="Ribosomal_uL16"/>
</dbReference>
<dbReference type="InterPro" id="IPR000114">
    <property type="entry name" value="Ribosomal_uL16_bact-type"/>
</dbReference>
<dbReference type="InterPro" id="IPR020798">
    <property type="entry name" value="Ribosomal_uL16_CS"/>
</dbReference>
<dbReference type="InterPro" id="IPR016180">
    <property type="entry name" value="Ribosomal_uL16_dom"/>
</dbReference>
<dbReference type="InterPro" id="IPR036920">
    <property type="entry name" value="Ribosomal_uL16_sf"/>
</dbReference>
<dbReference type="NCBIfam" id="TIGR01164">
    <property type="entry name" value="rplP_bact"/>
    <property type="match status" value="1"/>
</dbReference>
<dbReference type="PANTHER" id="PTHR12220">
    <property type="entry name" value="50S/60S RIBOSOMAL PROTEIN L16"/>
    <property type="match status" value="1"/>
</dbReference>
<dbReference type="PANTHER" id="PTHR12220:SF13">
    <property type="entry name" value="LARGE RIBOSOMAL SUBUNIT PROTEIN UL16M"/>
    <property type="match status" value="1"/>
</dbReference>
<dbReference type="Pfam" id="PF00252">
    <property type="entry name" value="Ribosomal_L16"/>
    <property type="match status" value="1"/>
</dbReference>
<dbReference type="PRINTS" id="PR00060">
    <property type="entry name" value="RIBOSOMALL16"/>
</dbReference>
<dbReference type="SUPFAM" id="SSF54686">
    <property type="entry name" value="Ribosomal protein L16p/L10e"/>
    <property type="match status" value="1"/>
</dbReference>
<dbReference type="PROSITE" id="PS00586">
    <property type="entry name" value="RIBOSOMAL_L16_1"/>
    <property type="match status" value="1"/>
</dbReference>
<dbReference type="PROSITE" id="PS00701">
    <property type="entry name" value="RIBOSOMAL_L16_2"/>
    <property type="match status" value="1"/>
</dbReference>
<sequence length="139" mass="15699">MLMPKRVKYRKSQRGRMKGNSGRGTSVSFGSFGLKAMEPAWITSRQIEAARVAMNRYMKRDGKIWIRIFPDKPVSKKAAETRMGSGKGSPEFWVAVVKPGRIMFEAEGVSREVATEAFRLAAQKLPIKTKFIVRPDYEG</sequence>
<accession>B3EGY3</accession>
<protein>
    <recommendedName>
        <fullName evidence="1">Large ribosomal subunit protein uL16</fullName>
    </recommendedName>
    <alternativeName>
        <fullName evidence="3">50S ribosomal protein L16</fullName>
    </alternativeName>
</protein>
<evidence type="ECO:0000255" key="1">
    <source>
        <dbReference type="HAMAP-Rule" id="MF_01342"/>
    </source>
</evidence>
<evidence type="ECO:0000256" key="2">
    <source>
        <dbReference type="SAM" id="MobiDB-lite"/>
    </source>
</evidence>
<evidence type="ECO:0000305" key="3"/>
<keyword id="KW-0687">Ribonucleoprotein</keyword>
<keyword id="KW-0689">Ribosomal protein</keyword>
<keyword id="KW-0694">RNA-binding</keyword>
<keyword id="KW-0699">rRNA-binding</keyword>
<keyword id="KW-0820">tRNA-binding</keyword>
<feature type="chain" id="PRO_1000142942" description="Large ribosomal subunit protein uL16">
    <location>
        <begin position="1"/>
        <end position="139"/>
    </location>
</feature>
<feature type="region of interest" description="Disordered" evidence="2">
    <location>
        <begin position="1"/>
        <end position="24"/>
    </location>
</feature>
<feature type="compositionally biased region" description="Basic residues" evidence="2">
    <location>
        <begin position="1"/>
        <end position="17"/>
    </location>
</feature>